<organism>
    <name type="scientific">Mus musculus</name>
    <name type="common">Mouse</name>
    <dbReference type="NCBI Taxonomy" id="10090"/>
    <lineage>
        <taxon>Eukaryota</taxon>
        <taxon>Metazoa</taxon>
        <taxon>Chordata</taxon>
        <taxon>Craniata</taxon>
        <taxon>Vertebrata</taxon>
        <taxon>Euteleostomi</taxon>
        <taxon>Mammalia</taxon>
        <taxon>Eutheria</taxon>
        <taxon>Euarchontoglires</taxon>
        <taxon>Glires</taxon>
        <taxon>Rodentia</taxon>
        <taxon>Myomorpha</taxon>
        <taxon>Muroidea</taxon>
        <taxon>Muridae</taxon>
        <taxon>Murinae</taxon>
        <taxon>Mus</taxon>
        <taxon>Mus</taxon>
    </lineage>
</organism>
<proteinExistence type="evidence at protein level"/>
<comment type="function">
    <text evidence="1 4 5 6 7 8 9">K(+) channel that conducts voltage-dependent outward rectifying currents upon membrane depolarization. Voltage sensing is coupled to K(+) electrochemical gradient in an 'ion flux gating' mode where outward but not inward ion flow opens the gate. Converts to voltage-independent 'leak' conductance mode upon stimulation by various stimuli including mechanical membrane stretch, acidic pH, heat and lipids (PubMed:27035963, PubMed:27035965). Homo- and heterodimerizes to form functional channels with distinct regulatory and gating properties (PubMed:19667202, PubMed:27035963, PubMed:27035965). In trigeminal ganglia sensory neurons, the heterodimer of KCNK10/TREK-2 and KCNK18/TRESK inhibits neuronal firing and neurogenic inflammation by stabilizing the resting membrane potential at K(+) equilibrium potential as well as by regulating the threshold of action potentials and the spike frequency (PubMed:30573346, PubMed:32641496, PubMed:34458705). Permeable to other monovalent ions such as Rb(+) and Cs(+) (By similarity).</text>
</comment>
<comment type="catalytic activity">
    <reaction evidence="4 5 6 8 9">
        <text>K(+)(in) = K(+)(out)</text>
        <dbReference type="Rhea" id="RHEA:29463"/>
        <dbReference type="ChEBI" id="CHEBI:29103"/>
    </reaction>
</comment>
<comment type="catalytic activity">
    <reaction evidence="1">
        <text>Rb(+)(in) = Rb(+)(out)</text>
        <dbReference type="Rhea" id="RHEA:78547"/>
        <dbReference type="ChEBI" id="CHEBI:49847"/>
    </reaction>
</comment>
<comment type="catalytic activity">
    <reaction evidence="1">
        <text>Cs(+)(in) = Cs(+)(out)</text>
        <dbReference type="Rhea" id="RHEA:78555"/>
        <dbReference type="ChEBI" id="CHEBI:49547"/>
    </reaction>
</comment>
<comment type="activity regulation">
    <text evidence="4 5 6 8 9">Activated by stimuli such as mechanical stretch, acidic pH and polyunsaturated free fatty acids (PubMed:19667202, PubMed:27035963). Activated by a dihydroacridine analog, ML67-33 (PubMed:34458705). Inhibited by polycationic dye ruthenium red (PubMed:27035965). Selectively activated by T2A3 (2-[(4-chloro-3-methylphenyl)amino] benzoic acid) (PubMed:32641496).</text>
</comment>
<comment type="subunit">
    <text evidence="5 6 7">Homodimer; disulfide-linked. Forms heterodimers with other 2-pore domain K(+) channel subunits, such as KCNK2, KCNK4 and KCNK18.</text>
</comment>
<comment type="subcellular location">
    <subcellularLocation>
        <location evidence="6">Cell membrane</location>
        <topology evidence="2">Multi-pass membrane protein</topology>
    </subcellularLocation>
</comment>
<comment type="alternative products">
    <event type="alternative splicing"/>
    <event type="alternative initiation"/>
    <isoform>
        <id>Q8BUW1-1</id>
        <name>1</name>
        <name evidence="10">TREK-2a</name>
        <sequence type="displayed"/>
    </isoform>
    <isoform>
        <id>Q8BUW1-2</id>
        <name>2</name>
        <name evidence="10">TREK-2b</name>
        <sequence type="described" ref="VSP_062410"/>
    </isoform>
    <isoform>
        <id>Q8BUW1-3</id>
        <name>3</name>
        <name evidence="10">TREK-2c</name>
        <sequence type="described" ref="VSP_062411 VSP_062412 VSP_062413"/>
    </isoform>
</comment>
<comment type="tissue specificity">
    <text evidence="6">Detected in dorsal root ganglia (DRG) neurons (at protein level).</text>
</comment>
<comment type="domain">
    <text evidence="1">Each subunit contributes two pore-forming domains 1 and 2 which assemble to form a single pore with M2 and M4 transmembrane helices lining the central cavity and M1 and M3 facing the lipid bilayer. The transmembrane helices are bridged by the selectivity filters 1 and 2 carrying a signature sequence TxTTxGYGD that coordinate the permeant ions. Up to four ions can simultaneously occupy the selectivity filter and at least two elementary charges must translocate across the filter to convert it into the open conformation.</text>
</comment>
<comment type="disruption phenotype">
    <text evidence="7">Double KCNK2 and KCNK10 knockout mice suffer from chronic cutaneous allodynia which can be partially reversed by treatment with topiramate, a drug used to treat chronic migrane.</text>
</comment>
<keyword id="KW-0024">Alternative initiation</keyword>
<keyword id="KW-0025">Alternative splicing</keyword>
<keyword id="KW-1003">Cell membrane</keyword>
<keyword id="KW-1015">Disulfide bond</keyword>
<keyword id="KW-0407">Ion channel</keyword>
<keyword id="KW-0406">Ion transport</keyword>
<keyword id="KW-0472">Membrane</keyword>
<keyword id="KW-0479">Metal-binding</keyword>
<keyword id="KW-0630">Potassium</keyword>
<keyword id="KW-1185">Reference proteome</keyword>
<keyword id="KW-0812">Transmembrane</keyword>
<keyword id="KW-1133">Transmembrane helix</keyword>
<keyword id="KW-0813">Transport</keyword>
<protein>
    <recommendedName>
        <fullName>Potassium channel subfamily K member 10</fullName>
    </recommendedName>
    <alternativeName>
        <fullName>Outward rectifying potassium channel protein TREK-2</fullName>
    </alternativeName>
    <alternativeName>
        <fullName>TREK-2 K(+) channel subunit</fullName>
    </alternativeName>
</protein>
<evidence type="ECO:0000250" key="1">
    <source>
        <dbReference type="UniProtKB" id="P57789"/>
    </source>
</evidence>
<evidence type="ECO:0000255" key="2"/>
<evidence type="ECO:0000256" key="3">
    <source>
        <dbReference type="SAM" id="MobiDB-lite"/>
    </source>
</evidence>
<evidence type="ECO:0000269" key="4">
    <source>
    </source>
</evidence>
<evidence type="ECO:0000269" key="5">
    <source>
    </source>
</evidence>
<evidence type="ECO:0000269" key="6">
    <source>
    </source>
</evidence>
<evidence type="ECO:0000269" key="7">
    <source>
    </source>
</evidence>
<evidence type="ECO:0000269" key="8">
    <source>
    </source>
</evidence>
<evidence type="ECO:0000269" key="9">
    <source>
    </source>
</evidence>
<evidence type="ECO:0000303" key="10">
    <source>
    </source>
</evidence>
<evidence type="ECO:0000312" key="11">
    <source>
        <dbReference type="MGI" id="MGI:1919508"/>
    </source>
</evidence>
<dbReference type="EMBL" id="AK019376">
    <property type="protein sequence ID" value="BAB31686.1"/>
    <property type="molecule type" value="mRNA"/>
</dbReference>
<dbReference type="EMBL" id="AK082153">
    <property type="protein sequence ID" value="BAC38424.1"/>
    <property type="molecule type" value="mRNA"/>
</dbReference>
<dbReference type="EMBL" id="BC132487">
    <property type="protein sequence ID" value="AAI32488.1"/>
    <property type="molecule type" value="mRNA"/>
</dbReference>
<dbReference type="EMBL" id="BC137869">
    <property type="protein sequence ID" value="AAI37870.1"/>
    <property type="molecule type" value="mRNA"/>
</dbReference>
<dbReference type="CCDS" id="CCDS36518.1">
    <molecule id="Q8BUW1-1"/>
</dbReference>
<dbReference type="CCDS" id="CCDS88385.1">
    <molecule id="Q8BUW1-3"/>
</dbReference>
<dbReference type="CCDS" id="CCDS88386.1">
    <molecule id="Q8BUW1-2"/>
</dbReference>
<dbReference type="RefSeq" id="NP_001303593.1">
    <molecule id="Q8BUW1-2"/>
    <property type="nucleotide sequence ID" value="NM_001316664.1"/>
</dbReference>
<dbReference type="RefSeq" id="NP_001303594.1">
    <property type="nucleotide sequence ID" value="NM_001316665.1"/>
</dbReference>
<dbReference type="RefSeq" id="NP_001303595.1">
    <property type="nucleotide sequence ID" value="NM_001316666.1"/>
</dbReference>
<dbReference type="RefSeq" id="NP_084187.2">
    <molecule id="Q8BUW1-1"/>
    <property type="nucleotide sequence ID" value="NM_029911.5"/>
</dbReference>
<dbReference type="RefSeq" id="XP_011242483.1">
    <molecule id="Q8BUW1-2"/>
    <property type="nucleotide sequence ID" value="XM_011244181.3"/>
</dbReference>
<dbReference type="SMR" id="Q8BUW1"/>
<dbReference type="FunCoup" id="Q8BUW1">
    <property type="interactions" value="703"/>
</dbReference>
<dbReference type="STRING" id="10090.ENSMUSP00000152473"/>
<dbReference type="PhosphoSitePlus" id="Q8BUW1"/>
<dbReference type="PaxDb" id="10090-ENSMUSP00000105740"/>
<dbReference type="ProteomicsDB" id="314183"/>
<dbReference type="ProteomicsDB" id="338578"/>
<dbReference type="ProteomicsDB" id="347148"/>
<dbReference type="Antibodypedia" id="13325">
    <property type="antibodies" value="219 antibodies from 25 providers"/>
</dbReference>
<dbReference type="DNASU" id="72258"/>
<dbReference type="Ensembl" id="ENSMUST00000110113.3">
    <molecule id="Q8BUW1-2"/>
    <property type="protein sequence ID" value="ENSMUSP00000105740.3"/>
    <property type="gene ID" value="ENSMUSG00000033854.11"/>
</dbReference>
<dbReference type="Ensembl" id="ENSMUST00000221240.2">
    <molecule id="Q8BUW1-1"/>
    <property type="protein sequence ID" value="ENSMUSP00000152473.2"/>
    <property type="gene ID" value="ENSMUSG00000033854.11"/>
</dbReference>
<dbReference type="GeneID" id="72258"/>
<dbReference type="KEGG" id="mmu:72258"/>
<dbReference type="UCSC" id="uc007oqh.1">
    <molecule id="Q8BUW1-1"/>
    <property type="organism name" value="mouse"/>
</dbReference>
<dbReference type="AGR" id="MGI:1919508"/>
<dbReference type="CTD" id="54207"/>
<dbReference type="MGI" id="MGI:1919508">
    <property type="gene designation" value="Kcnk10"/>
</dbReference>
<dbReference type="VEuPathDB" id="HostDB:ENSMUSG00000033854"/>
<dbReference type="eggNOG" id="KOG1418">
    <property type="taxonomic scope" value="Eukaryota"/>
</dbReference>
<dbReference type="GeneTree" id="ENSGT00940000156147"/>
<dbReference type="HOGENOM" id="CLU_022504_10_0_1"/>
<dbReference type="OMA" id="MNWYKPL"/>
<dbReference type="OrthoDB" id="297496at2759"/>
<dbReference type="TreeFam" id="TF313947"/>
<dbReference type="Reactome" id="R-MMU-1299503">
    <property type="pathway name" value="TWIK related potassium channel (TREK)"/>
</dbReference>
<dbReference type="Reactome" id="R-MMU-5576886">
    <property type="pathway name" value="Phase 4 - resting membrane potential"/>
</dbReference>
<dbReference type="BioGRID-ORCS" id="72258">
    <property type="hits" value="1 hit in 77 CRISPR screens"/>
</dbReference>
<dbReference type="ChiTaRS" id="Kcnk10">
    <property type="organism name" value="mouse"/>
</dbReference>
<dbReference type="Proteomes" id="UP000000589">
    <property type="component" value="Chromosome 12"/>
</dbReference>
<dbReference type="RNAct" id="Q8BUW1">
    <property type="molecule type" value="protein"/>
</dbReference>
<dbReference type="Bgee" id="ENSMUSG00000033854">
    <property type="expression patterns" value="Expressed in embryonic brain and 52 other cell types or tissues"/>
</dbReference>
<dbReference type="ExpressionAtlas" id="Q8BUW1">
    <property type="expression patterns" value="baseline and differential"/>
</dbReference>
<dbReference type="GO" id="GO:0005886">
    <property type="term" value="C:plasma membrane"/>
    <property type="evidence" value="ECO:0007669"/>
    <property type="project" value="UniProtKB-SubCell"/>
</dbReference>
<dbReference type="GO" id="GO:0098782">
    <property type="term" value="F:mechanosensitive potassium channel activity"/>
    <property type="evidence" value="ECO:0000250"/>
    <property type="project" value="UniProtKB"/>
</dbReference>
<dbReference type="GO" id="GO:0046872">
    <property type="term" value="F:metal ion binding"/>
    <property type="evidence" value="ECO:0007669"/>
    <property type="project" value="UniProtKB-KW"/>
</dbReference>
<dbReference type="GO" id="GO:0015271">
    <property type="term" value="F:outward rectifier potassium channel activity"/>
    <property type="evidence" value="ECO:0000250"/>
    <property type="project" value="UniProtKB"/>
</dbReference>
<dbReference type="GO" id="GO:0022841">
    <property type="term" value="F:potassium ion leak channel activity"/>
    <property type="evidence" value="ECO:0000250"/>
    <property type="project" value="UniProtKB"/>
</dbReference>
<dbReference type="GO" id="GO:1904551">
    <property type="term" value="P:cellular response to arachidonate"/>
    <property type="evidence" value="ECO:0000250"/>
    <property type="project" value="UniProtKB"/>
</dbReference>
<dbReference type="FunFam" id="1.10.287.70:FF:000043">
    <property type="entry name" value="Potassium channel subfamily K member 10 isoform 2"/>
    <property type="match status" value="1"/>
</dbReference>
<dbReference type="Gene3D" id="1.10.287.70">
    <property type="match status" value="1"/>
</dbReference>
<dbReference type="InterPro" id="IPR003280">
    <property type="entry name" value="2pore_dom_K_chnl"/>
</dbReference>
<dbReference type="InterPro" id="IPR003976">
    <property type="entry name" value="2pore_dom_K_chnl_TREK"/>
</dbReference>
<dbReference type="InterPro" id="IPR013099">
    <property type="entry name" value="K_chnl_dom"/>
</dbReference>
<dbReference type="PANTHER" id="PTHR11003:SF32">
    <property type="entry name" value="POTASSIUM CHANNEL SUBFAMILY K MEMBER 10"/>
    <property type="match status" value="1"/>
</dbReference>
<dbReference type="PANTHER" id="PTHR11003">
    <property type="entry name" value="POTASSIUM CHANNEL, SUBFAMILY K"/>
    <property type="match status" value="1"/>
</dbReference>
<dbReference type="Pfam" id="PF07885">
    <property type="entry name" value="Ion_trans_2"/>
    <property type="match status" value="2"/>
</dbReference>
<dbReference type="PRINTS" id="PR01333">
    <property type="entry name" value="2POREKCHANEL"/>
</dbReference>
<dbReference type="PRINTS" id="PR01499">
    <property type="entry name" value="TREKCHANNEL"/>
</dbReference>
<dbReference type="SUPFAM" id="SSF81324">
    <property type="entry name" value="Voltage-gated potassium channels"/>
    <property type="match status" value="2"/>
</dbReference>
<gene>
    <name evidence="11" type="primary">Kcnk10</name>
</gene>
<reference key="1">
    <citation type="journal article" date="2005" name="Science">
        <title>The transcriptional landscape of the mammalian genome.</title>
        <authorList>
            <person name="Carninci P."/>
            <person name="Kasukawa T."/>
            <person name="Katayama S."/>
            <person name="Gough J."/>
            <person name="Frith M.C."/>
            <person name="Maeda N."/>
            <person name="Oyama R."/>
            <person name="Ravasi T."/>
            <person name="Lenhard B."/>
            <person name="Wells C."/>
            <person name="Kodzius R."/>
            <person name="Shimokawa K."/>
            <person name="Bajic V.B."/>
            <person name="Brenner S.E."/>
            <person name="Batalov S."/>
            <person name="Forrest A.R."/>
            <person name="Zavolan M."/>
            <person name="Davis M.J."/>
            <person name="Wilming L.G."/>
            <person name="Aidinis V."/>
            <person name="Allen J.E."/>
            <person name="Ambesi-Impiombato A."/>
            <person name="Apweiler R."/>
            <person name="Aturaliya R.N."/>
            <person name="Bailey T.L."/>
            <person name="Bansal M."/>
            <person name="Baxter L."/>
            <person name="Beisel K.W."/>
            <person name="Bersano T."/>
            <person name="Bono H."/>
            <person name="Chalk A.M."/>
            <person name="Chiu K.P."/>
            <person name="Choudhary V."/>
            <person name="Christoffels A."/>
            <person name="Clutterbuck D.R."/>
            <person name="Crowe M.L."/>
            <person name="Dalla E."/>
            <person name="Dalrymple B.P."/>
            <person name="de Bono B."/>
            <person name="Della Gatta G."/>
            <person name="di Bernardo D."/>
            <person name="Down T."/>
            <person name="Engstrom P."/>
            <person name="Fagiolini M."/>
            <person name="Faulkner G."/>
            <person name="Fletcher C.F."/>
            <person name="Fukushima T."/>
            <person name="Furuno M."/>
            <person name="Futaki S."/>
            <person name="Gariboldi M."/>
            <person name="Georgii-Hemming P."/>
            <person name="Gingeras T.R."/>
            <person name="Gojobori T."/>
            <person name="Green R.E."/>
            <person name="Gustincich S."/>
            <person name="Harbers M."/>
            <person name="Hayashi Y."/>
            <person name="Hensch T.K."/>
            <person name="Hirokawa N."/>
            <person name="Hill D."/>
            <person name="Huminiecki L."/>
            <person name="Iacono M."/>
            <person name="Ikeo K."/>
            <person name="Iwama A."/>
            <person name="Ishikawa T."/>
            <person name="Jakt M."/>
            <person name="Kanapin A."/>
            <person name="Katoh M."/>
            <person name="Kawasawa Y."/>
            <person name="Kelso J."/>
            <person name="Kitamura H."/>
            <person name="Kitano H."/>
            <person name="Kollias G."/>
            <person name="Krishnan S.P."/>
            <person name="Kruger A."/>
            <person name="Kummerfeld S.K."/>
            <person name="Kurochkin I.V."/>
            <person name="Lareau L.F."/>
            <person name="Lazarevic D."/>
            <person name="Lipovich L."/>
            <person name="Liu J."/>
            <person name="Liuni S."/>
            <person name="McWilliam S."/>
            <person name="Madan Babu M."/>
            <person name="Madera M."/>
            <person name="Marchionni L."/>
            <person name="Matsuda H."/>
            <person name="Matsuzawa S."/>
            <person name="Miki H."/>
            <person name="Mignone F."/>
            <person name="Miyake S."/>
            <person name="Morris K."/>
            <person name="Mottagui-Tabar S."/>
            <person name="Mulder N."/>
            <person name="Nakano N."/>
            <person name="Nakauchi H."/>
            <person name="Ng P."/>
            <person name="Nilsson R."/>
            <person name="Nishiguchi S."/>
            <person name="Nishikawa S."/>
            <person name="Nori F."/>
            <person name="Ohara O."/>
            <person name="Okazaki Y."/>
            <person name="Orlando V."/>
            <person name="Pang K.C."/>
            <person name="Pavan W.J."/>
            <person name="Pavesi G."/>
            <person name="Pesole G."/>
            <person name="Petrovsky N."/>
            <person name="Piazza S."/>
            <person name="Reed J."/>
            <person name="Reid J.F."/>
            <person name="Ring B.Z."/>
            <person name="Ringwald M."/>
            <person name="Rost B."/>
            <person name="Ruan Y."/>
            <person name="Salzberg S.L."/>
            <person name="Sandelin A."/>
            <person name="Schneider C."/>
            <person name="Schoenbach C."/>
            <person name="Sekiguchi K."/>
            <person name="Semple C.A."/>
            <person name="Seno S."/>
            <person name="Sessa L."/>
            <person name="Sheng Y."/>
            <person name="Shibata Y."/>
            <person name="Shimada H."/>
            <person name="Shimada K."/>
            <person name="Silva D."/>
            <person name="Sinclair B."/>
            <person name="Sperling S."/>
            <person name="Stupka E."/>
            <person name="Sugiura K."/>
            <person name="Sultana R."/>
            <person name="Takenaka Y."/>
            <person name="Taki K."/>
            <person name="Tammoja K."/>
            <person name="Tan S.L."/>
            <person name="Tang S."/>
            <person name="Taylor M.S."/>
            <person name="Tegner J."/>
            <person name="Teichmann S.A."/>
            <person name="Ueda H.R."/>
            <person name="van Nimwegen E."/>
            <person name="Verardo R."/>
            <person name="Wei C.L."/>
            <person name="Yagi K."/>
            <person name="Yamanishi H."/>
            <person name="Zabarovsky E."/>
            <person name="Zhu S."/>
            <person name="Zimmer A."/>
            <person name="Hide W."/>
            <person name="Bult C."/>
            <person name="Grimmond S.M."/>
            <person name="Teasdale R.D."/>
            <person name="Liu E.T."/>
            <person name="Brusic V."/>
            <person name="Quackenbush J."/>
            <person name="Wahlestedt C."/>
            <person name="Mattick J.S."/>
            <person name="Hume D.A."/>
            <person name="Kai C."/>
            <person name="Sasaki D."/>
            <person name="Tomaru Y."/>
            <person name="Fukuda S."/>
            <person name="Kanamori-Katayama M."/>
            <person name="Suzuki M."/>
            <person name="Aoki J."/>
            <person name="Arakawa T."/>
            <person name="Iida J."/>
            <person name="Imamura K."/>
            <person name="Itoh M."/>
            <person name="Kato T."/>
            <person name="Kawaji H."/>
            <person name="Kawagashira N."/>
            <person name="Kawashima T."/>
            <person name="Kojima M."/>
            <person name="Kondo S."/>
            <person name="Konno H."/>
            <person name="Nakano K."/>
            <person name="Ninomiya N."/>
            <person name="Nishio T."/>
            <person name="Okada M."/>
            <person name="Plessy C."/>
            <person name="Shibata K."/>
            <person name="Shiraki T."/>
            <person name="Suzuki S."/>
            <person name="Tagami M."/>
            <person name="Waki K."/>
            <person name="Watahiki A."/>
            <person name="Okamura-Oho Y."/>
            <person name="Suzuki H."/>
            <person name="Kawai J."/>
            <person name="Hayashizaki Y."/>
        </authorList>
    </citation>
    <scope>NUCLEOTIDE SEQUENCE [LARGE SCALE MRNA] (ISOFORMS 1 AND 3)</scope>
</reference>
<reference key="2">
    <citation type="journal article" date="2009" name="PLoS Biol.">
        <title>Lineage-specific biology revealed by a finished genome assembly of the mouse.</title>
        <authorList>
            <person name="Church D.M."/>
            <person name="Goodstadt L."/>
            <person name="Hillier L.W."/>
            <person name="Zody M.C."/>
            <person name="Goldstein S."/>
            <person name="She X."/>
            <person name="Bult C.J."/>
            <person name="Agarwala R."/>
            <person name="Cherry J.L."/>
            <person name="DiCuccio M."/>
            <person name="Hlavina W."/>
            <person name="Kapustin Y."/>
            <person name="Meric P."/>
            <person name="Maglott D."/>
            <person name="Birtle Z."/>
            <person name="Marques A.C."/>
            <person name="Graves T."/>
            <person name="Zhou S."/>
            <person name="Teague B."/>
            <person name="Potamousis K."/>
            <person name="Churas C."/>
            <person name="Place M."/>
            <person name="Herschleb J."/>
            <person name="Runnheim R."/>
            <person name="Forrest D."/>
            <person name="Amos-Landgraf J."/>
            <person name="Schwartz D.C."/>
            <person name="Cheng Z."/>
            <person name="Lindblad-Toh K."/>
            <person name="Eichler E.E."/>
            <person name="Ponting C.P."/>
        </authorList>
    </citation>
    <scope>NUCLEOTIDE SEQUENCE [LARGE SCALE GENOMIC DNA]</scope>
    <source>
        <strain>C57BL/6J</strain>
    </source>
</reference>
<reference key="3">
    <citation type="journal article" date="2004" name="Genome Res.">
        <title>The status, quality, and expansion of the NIH full-length cDNA project: the Mammalian Gene Collection (MGC).</title>
        <authorList>
            <consortium name="The MGC Project Team"/>
        </authorList>
    </citation>
    <scope>NUCLEOTIDE SEQUENCE [LARGE SCALE MRNA] (ISOFORM 1)</scope>
</reference>
<reference key="4">
    <citation type="journal article" date="2009" name="Proc. Natl. Acad. Sci. U.S.A.">
        <title>Extracellular acidification exerts opposite actions on TREK1 and TREK2 potassium channels via a single conserved histidine residue.</title>
        <authorList>
            <person name="Sandoz G."/>
            <person name="Douguet D."/>
            <person name="Chatelain F."/>
            <person name="Lazdunski M."/>
            <person name="Lesage F."/>
        </authorList>
    </citation>
    <scope>FUNCTION</scope>
    <scope>TRANSPORTER ACTIVITY</scope>
    <scope>ACTIVITY REGULATION</scope>
    <scope>SITE</scope>
    <scope>MUTAGENESIS OF HIS-148; PHE-279; ASN-284; ALA-285; ASN-288 AND ARG-290</scope>
</reference>
<reference key="5">
    <citation type="journal article" date="2016" name="Proc. Natl. Acad. Sci. U.S.A.">
        <title>Heterodimerization within the TREK channel subfamily produces a diverse family of highly regulated potassium channels.</title>
        <authorList>
            <person name="Levitz J."/>
            <person name="Royal P."/>
            <person name="Comoglio Y."/>
            <person name="Wdziekonski B."/>
            <person name="Schaub S."/>
            <person name="Clemens D.M."/>
            <person name="Isacoff E.Y."/>
            <person name="Sandoz G."/>
        </authorList>
    </citation>
    <scope>FUNCTION</scope>
    <scope>TRANSPORTER ACTIVITY</scope>
    <scope>ACTIVITY REGULATION</scope>
    <scope>SUBUNIT</scope>
    <scope>INTERACTION WITH KCNK2 AND KCNK4</scope>
    <scope>MUTAGENESIS OF HIS-151 (ISOFORM 3)</scope>
</reference>
<reference key="6">
    <citation type="journal article" date="2016" name="Proc. Natl. Acad. Sci. U.S.A.">
        <title>Mixing and matching TREK/TRAAK subunits generate heterodimeric K2P channels with unique properties.</title>
        <authorList>
            <person name="Blin S."/>
            <person name="Ben Soussia I."/>
            <person name="Kim E.J."/>
            <person name="Brau F."/>
            <person name="Kang D."/>
            <person name="Lesage F."/>
            <person name="Bichet D."/>
        </authorList>
    </citation>
    <scope>FUNCTION</scope>
    <scope>TRANSPORTER ACTIVITY</scope>
    <scope>ACTIVITY REGULATION</scope>
    <scope>SUBUNIT</scope>
    <scope>INTERACTION WITH KCNK2 AND KCNK4</scope>
    <scope>TISSUE SPECIFICITY</scope>
    <scope>SUBCELLULAR LOCATION</scope>
    <scope>MUTAGENESIS OF ASP-135 (ISOFORM 3)</scope>
</reference>
<reference key="7">
    <citation type="journal article" date="2019" name="Neuron">
        <title>Migraine-Associated TRESK Mutations Increase Neuronal Excitability through Alternative Translation Initiation and Inhibition of TREK.</title>
        <authorList>
            <person name="Royal P."/>
            <person name="Andres-Bilbe A."/>
            <person name="Avalos Prado P."/>
            <person name="Verkest C."/>
            <person name="Wdziekonski B."/>
            <person name="Schaub S."/>
            <person name="Baron A."/>
            <person name="Lesage F."/>
            <person name="Gasull X."/>
            <person name="Levitz J."/>
            <person name="Sandoz G."/>
        </authorList>
    </citation>
    <scope>FUNCTION</scope>
    <scope>SUBUNIT</scope>
    <scope>INTERACTION WITH KCNK18</scope>
    <scope>DISRUPTION PHENOTYPE</scope>
</reference>
<reference key="8">
    <citation type="journal article" date="2020" name="J. Biol. Chem.">
        <title>TRESK and TREK-2 two-pore-domain potassium channel subunits form functional heterodimers in primary somatosensory neurons.</title>
        <authorList>
            <person name="Lengyel M."/>
            <person name="Czirjak G."/>
            <person name="Jacobson D.A."/>
            <person name="Enyedi P."/>
        </authorList>
    </citation>
    <scope>FUNCTION</scope>
    <scope>TRANSPORTER ACTIVITY</scope>
    <scope>ACTIVITY REGULATION</scope>
</reference>
<reference key="9">
    <citation type="journal article" date="2021" name="IScience">
        <title>TREK channel activation suppresses migraine pain phenotype.</title>
        <authorList>
            <person name="Avalos Prado P."/>
            <person name="Landra-Willm A."/>
            <person name="Verkest C."/>
            <person name="Ribera A."/>
            <person name="Chassot A.A."/>
            <person name="Baron A."/>
            <person name="Sandoz G."/>
        </authorList>
    </citation>
    <scope>FUNCTION</scope>
    <scope>TRANSPORTER ACTIVITY</scope>
    <scope>ACTIVITY REGULATION</scope>
</reference>
<feature type="chain" id="PRO_5015099077" description="Potassium channel subfamily K member 10" evidence="2">
    <location>
        <begin position="1"/>
        <end position="535"/>
    </location>
</feature>
<feature type="topological domain" description="Cytoplasmic" evidence="2">
    <location>
        <begin position="1"/>
        <end position="68"/>
    </location>
</feature>
<feature type="transmembrane region" description="Helical" evidence="2">
    <location>
        <begin position="69"/>
        <end position="89"/>
    </location>
</feature>
<feature type="intramembrane region" description="Pore-forming; Name=Pore-forming 1" evidence="1">
    <location>
        <begin position="151"/>
        <end position="177"/>
    </location>
</feature>
<feature type="transmembrane region" description="Helical" evidence="2">
    <location>
        <begin position="179"/>
        <end position="199"/>
    </location>
</feature>
<feature type="topological domain" description="Cytoplasmic" evidence="2">
    <location>
        <begin position="200"/>
        <end position="230"/>
    </location>
</feature>
<feature type="transmembrane region" description="Helical" evidence="2">
    <location>
        <begin position="231"/>
        <end position="251"/>
    </location>
</feature>
<feature type="intramembrane region" description="Pore-forming; Name=Pore-forming 2" evidence="1">
    <location>
        <begin position="260"/>
        <end position="291"/>
    </location>
</feature>
<feature type="transmembrane region" description="Helical" evidence="2">
    <location>
        <begin position="296"/>
        <end position="316"/>
    </location>
</feature>
<feature type="topological domain" description="Cytoplasmic" evidence="2">
    <location>
        <begin position="317"/>
        <end position="535"/>
    </location>
</feature>
<feature type="region of interest" description="Selectivity filter 1" evidence="1">
    <location>
        <begin position="164"/>
        <end position="169"/>
    </location>
</feature>
<feature type="region of interest" description="Selectivity filter 2" evidence="1">
    <location>
        <begin position="273"/>
        <end position="278"/>
    </location>
</feature>
<feature type="region of interest" description="Disordered" evidence="3">
    <location>
        <begin position="410"/>
        <end position="438"/>
    </location>
</feature>
<feature type="region of interest" description="Disordered" evidence="3">
    <location>
        <begin position="510"/>
        <end position="535"/>
    </location>
</feature>
<feature type="compositionally biased region" description="Polar residues" evidence="3">
    <location>
        <begin position="525"/>
        <end position="535"/>
    </location>
</feature>
<feature type="binding site" evidence="1">
    <location>
        <position position="164"/>
    </location>
    <ligand>
        <name>K(+)</name>
        <dbReference type="ChEBI" id="CHEBI:29103"/>
        <label>1</label>
    </ligand>
</feature>
<feature type="binding site" evidence="1">
    <location>
        <position position="164"/>
    </location>
    <ligand>
        <name>K(+)</name>
        <dbReference type="ChEBI" id="CHEBI:29103"/>
        <label>4</label>
    </ligand>
</feature>
<feature type="binding site" evidence="1">
    <location>
        <position position="165"/>
    </location>
    <ligand>
        <name>K(+)</name>
        <dbReference type="ChEBI" id="CHEBI:29103"/>
        <label>1</label>
    </ligand>
</feature>
<feature type="binding site" evidence="1">
    <location>
        <position position="165"/>
    </location>
    <ligand>
        <name>K(+)</name>
        <dbReference type="ChEBI" id="CHEBI:29103"/>
        <label>2</label>
    </ligand>
</feature>
<feature type="binding site" evidence="1">
    <location>
        <position position="166"/>
    </location>
    <ligand>
        <name>K(+)</name>
        <dbReference type="ChEBI" id="CHEBI:29103"/>
        <label>2</label>
    </ligand>
</feature>
<feature type="binding site" evidence="1">
    <location>
        <position position="166"/>
    </location>
    <ligand>
        <name>K(+)</name>
        <dbReference type="ChEBI" id="CHEBI:29103"/>
        <label>3</label>
    </ligand>
</feature>
<feature type="binding site" evidence="1">
    <location>
        <position position="167"/>
    </location>
    <ligand>
        <name>K(+)</name>
        <dbReference type="ChEBI" id="CHEBI:29103"/>
        <label>3</label>
    </ligand>
</feature>
<feature type="binding site" evidence="1">
    <location>
        <position position="273"/>
    </location>
    <ligand>
        <name>K(+)</name>
        <dbReference type="ChEBI" id="CHEBI:29103"/>
        <label>1</label>
    </ligand>
</feature>
<feature type="binding site" evidence="1">
    <location>
        <position position="273"/>
    </location>
    <ligand>
        <name>K(+)</name>
        <dbReference type="ChEBI" id="CHEBI:29103"/>
        <label>4</label>
    </ligand>
</feature>
<feature type="binding site" evidence="1">
    <location>
        <position position="274"/>
    </location>
    <ligand>
        <name>K(+)</name>
        <dbReference type="ChEBI" id="CHEBI:29103"/>
        <label>1</label>
    </ligand>
</feature>
<feature type="binding site" evidence="1">
    <location>
        <position position="274"/>
    </location>
    <ligand>
        <name>K(+)</name>
        <dbReference type="ChEBI" id="CHEBI:29103"/>
        <label>2</label>
    </ligand>
</feature>
<feature type="binding site" evidence="1">
    <location>
        <position position="275"/>
    </location>
    <ligand>
        <name>K(+)</name>
        <dbReference type="ChEBI" id="CHEBI:29103"/>
        <label>2</label>
    </ligand>
</feature>
<feature type="binding site" evidence="1">
    <location>
        <position position="275"/>
    </location>
    <ligand>
        <name>K(+)</name>
        <dbReference type="ChEBI" id="CHEBI:29103"/>
        <label>3</label>
    </ligand>
</feature>
<feature type="binding site" evidence="1">
    <location>
        <position position="276"/>
    </location>
    <ligand>
        <name>K(+)</name>
        <dbReference type="ChEBI" id="CHEBI:29103"/>
        <label>3</label>
    </ligand>
</feature>
<feature type="site" description="pH sensor" evidence="4 5">
    <location>
        <position position="148"/>
    </location>
</feature>
<feature type="disulfide bond" description="Interchain (with C-115)" evidence="1">
    <location>
        <position position="115"/>
    </location>
</feature>
<feature type="splice variant" id="VSP_062410" description="In isoform 2.">
    <original>MYFSYIGYFFLPPLV</original>
    <variation>M</variation>
    <location>
        <begin position="1"/>
        <end position="15"/>
    </location>
</feature>
<feature type="splice variant" id="VSP_062411" description="In isoform 3.">
    <original>YFSYIGYFFLPPL</original>
    <variation>KFPIETPRKQVNWDPK</variation>
    <location>
        <begin position="2"/>
        <end position="14"/>
    </location>
</feature>
<feature type="splice variant" id="VSP_062412" description="In isoform 3.">
    <original>KKQVSQTKIRVISTILFIL</original>
    <variation>AHGCFVCTHIFVPGIHGSH</variation>
    <location>
        <begin position="220"/>
        <end position="238"/>
    </location>
</feature>
<feature type="splice variant" id="VSP_062413" description="In isoform 3.">
    <location>
        <begin position="239"/>
        <end position="535"/>
    </location>
</feature>
<feature type="mutagenesis site" description="Decreased basal mean amplitude of channel current." evidence="4">
    <original>H</original>
    <variation>A</variation>
    <location>
        <position position="148"/>
    </location>
</feature>
<feature type="mutagenesis site" description="Increased basal mean amplitude of channel current." evidence="4">
    <original>H</original>
    <variation>K</variation>
    <location>
        <position position="148"/>
    </location>
</feature>
<feature type="mutagenesis site" description="No effect on extracellular pH sensing. Causes reduced inhibition induced by a pH shift from 7.2 to 8; when associated with S-284, D-285 and E-288. Inverts pH-dependent gating, with channel conductance being inhibited by acidic pH and activated by basic pH; when associated with S-284, D-285, E-288 and L-290." evidence="4">
    <original>F</original>
    <variation>Y</variation>
    <location>
        <position position="279"/>
    </location>
</feature>
<feature type="mutagenesis site" description="No effect on extracellular pH sensing. Causes reduced inhibition induced by a pH shift from 7.2 to 8; when associated with Y-279, D-285 and E-288. Inverts pH-dependent gating, with channel conductance being inhibited by acidic pH and activated by basic pH; when associated with Y-279, D-285, E-288 and L-290." evidence="4">
    <original>N</original>
    <variation>S</variation>
    <location>
        <position position="284"/>
    </location>
</feature>
<feature type="mutagenesis site" description="No effect on extracellular pH sensing. Causes reduced inhibition induced by a pH shift from 7.2 to 8; when associated with S-279, S-284 and E-288. Inverts pH-dependent gating, with channel conductance being inhibited by acidic pH and activated by basic pH; when associated with Y-279, S-284, E-288 and L-290." evidence="4">
    <original>A</original>
    <variation>D</variation>
    <location>
        <position position="285"/>
    </location>
</feature>
<feature type="mutagenesis site" description="No effect on extracellular pH sensing. Causes reduced inhibition induced by a pH shift from 7.2 to 8; when associated with S-279, S-284 and D-285. Inverts pH-dependent gating, with channel conductance being inhibited by acidic pH and activated by basic pH; when associated with Y-279, S-284, D-285 and L-290." evidence="4">
    <original>N</original>
    <variation>E</variation>
    <location>
        <position position="288"/>
    </location>
</feature>
<feature type="mutagenesis site" description="Loss of K(+) channel activity. Normal basal conductance but reduced inhibition induced by a pH shift from 7.2 to 8; when associated with Y-279. Inverts pH-dependent gating, with channel conductance being inhibited by acidic pH and activated by basic pH; when associated with Y-279, S-284, D-285 and E-288." evidence="4">
    <original>R</original>
    <variation>L</variation>
    <location>
        <position position="290"/>
    </location>
</feature>
<feature type="site" description="pH sensor" evidence="5">
    <location sequence="Q8BUW1-3">
        <position position="151"/>
    </location>
</feature>
<feature type="mutagenesis site" description="Confers resistance to ruthenium red." evidence="6">
    <original>D</original>
    <variation>I</variation>
    <location sequence="Q8BUW1-3">
        <position position="135"/>
    </location>
</feature>
<feature type="mutagenesis site" description="Mimics the deprotonated state and decreases the basal current. In heterodimer with KCNK2, it displays KCNK2-like pH dependence." evidence="5">
    <original>H</original>
    <variation>A</variation>
    <location sequence="Q8BUW1-3">
        <position position="151"/>
    </location>
</feature>
<feature type="mutagenesis site" description="Mimics the protonated state and increases the basal current. In heterodimer with KCNK2, it displays KCNK2-like pH dependence." evidence="5">
    <original>H</original>
    <variation>K</variation>
    <location sequence="Q8BUW1-3">
        <position position="151"/>
    </location>
</feature>
<name>KCNKA_MOUSE</name>
<sequence>MYFSYIGYFFLPPLVAVPAAAPPVCQPKSATNGHHPVPRLSISSRATVVARMEGASQGGLQTVMKWKTVVAIFVVVVVYLVTGGLVFRALEQPFESSQKNTIALEKAEFLRDHICVSPQELETLIQHALDADNAGVSPVGNSSNSSSHWDLGSAFFFAGTVITTIGYGNIAPSTEGGKIFCILYAIFGIPLFGFLLAGIGDQLGTIFGKSIARVEKVFRKKQVSQTKIRVISTILFILAGCIVFVTIPAVIFKYIEGWTALESIYFVVVTLTTVGFGDFVAGGNAGINYREWYKPLVWFWILVGLAYFAAVLSMIGDWLRVLSKKTKEEVGEIKAHAAEWKANVTAEFRETRRRLSVEIHDKLQRAATIRSMERRRLGLDQRAHSLDMLSPEKRSVFAALDTGRFKASSQESINNRPNNLRLKGPEQLTKHGQGASEDNIINKFGSTSKLTKRKNKDLKKTLPEDVQKIYKTFRNYSLDEEKKEDETEKMCNSDNSSTAMLTECIQQQAEMENGMVPTDTKDQGLENNSLLEDRN</sequence>
<accession>Q8BUW1</accession>
<accession>A0A1Y7VJZ9</accession>
<accession>F6YU65</accession>
<accession>Q9CX88</accession>